<name>LP9D_BOTFB</name>
<accession>A0A384JLD1</accession>
<proteinExistence type="evidence at transcript level"/>
<organism>
    <name type="scientific">Botryotinia fuckeliana (strain B05.10)</name>
    <name type="common">Noble rot fungus</name>
    <name type="synonym">Botrytis cinerea</name>
    <dbReference type="NCBI Taxonomy" id="332648"/>
    <lineage>
        <taxon>Eukaryota</taxon>
        <taxon>Fungi</taxon>
        <taxon>Dikarya</taxon>
        <taxon>Ascomycota</taxon>
        <taxon>Pezizomycotina</taxon>
        <taxon>Leotiomycetes</taxon>
        <taxon>Helotiales</taxon>
        <taxon>Sclerotiniaceae</taxon>
        <taxon>Botrytis</taxon>
    </lineage>
</organism>
<comment type="function">
    <text evidence="9">Lytic polysaccharide monooxygenase (LPMO) that depolymerizes crystalline and amorphous polysaccharides via the oxidation of scissile alpha- or beta-(1-4)-glycosidic bonds, yielding C1 and C4 oxidation products (Probable). Catalysis by LPMOs requires the reduction of the active-site copper from Cu(II) to Cu(I) by a reducing agent and H(2)O(2) or O(2) as a cosubstrate (Probable).</text>
</comment>
<comment type="catalytic activity">
    <reaction evidence="9">
        <text>[(1-&gt;4)-beta-D-glucosyl]n+m + reduced acceptor + O2 = 4-dehydro-beta-D-glucosyl-[(1-&gt;4)-beta-D-glucosyl]n-1 + [(1-&gt;4)-beta-D-glucosyl]m + acceptor + H2O.</text>
        <dbReference type="EC" id="1.14.99.56"/>
    </reaction>
</comment>
<comment type="cofactor">
    <cofactor evidence="9">
        <name>Cu(2+)</name>
        <dbReference type="ChEBI" id="CHEBI:29036"/>
    </cofactor>
    <text evidence="9">Binds 1 copper ion per subunit.</text>
</comment>
<comment type="subcellular location">
    <subcellularLocation>
        <location evidence="9">Secreted</location>
    </subcellularLocation>
</comment>
<comment type="induction">
    <text evidence="6">Expression is increased 4-fold in cellulose-inducible conditions (in Avicel- and wheat bran-containing complex medium).</text>
</comment>
<comment type="biotechnology">
    <text evidence="9">Lignocellulose is the most abundant polymeric composite on Earth and is a recalcitrant but promising renewable substrate for industrial biotechnology applications. Together with cellobiose dehydrogenases (CDHs) an enzymatic system capable of oxidative cellulose cleavage is formed, which increases the efficiency of cellulases and put LPMOs at focus of biofuel research.</text>
</comment>
<comment type="similarity">
    <text evidence="8">Belongs to the polysaccharide monooxygenase AA9 family.</text>
</comment>
<sequence length="246" mass="26350">MHLLSLLFPVIALIPTVLSHGYVSGIVANGVYTAGWQVSYWYDIINKVPYPQTPGWYEEALDLGFVAPDQYSTSDIICHKNAVNANVSATVAAGGTVQFQWTTWPHNIGPVLTYVANCGGSCSTVNKNNLKWVKIDQSGINFSTQVWATGALMANNNTWTSTVPKTLAAGHYIFRHEIIALHGATTANGAQNYPFCVNIDVTGSGTASPAGVAATSFYKATDPGILFNPYVTLSNYTIPGPALWTG</sequence>
<reference key="1">
    <citation type="journal article" date="2011" name="PLoS Genet.">
        <title>Genomic analysis of the necrotrophic fungal pathogens Sclerotinia sclerotiorum and Botrytis cinerea.</title>
        <authorList>
            <person name="Amselem J."/>
            <person name="Cuomo C.A."/>
            <person name="van Kan J.A.L."/>
            <person name="Viaud M."/>
            <person name="Benito E.P."/>
            <person name="Couloux A."/>
            <person name="Coutinho P.M."/>
            <person name="de Vries R.P."/>
            <person name="Dyer P.S."/>
            <person name="Fillinger S."/>
            <person name="Fournier E."/>
            <person name="Gout L."/>
            <person name="Hahn M."/>
            <person name="Kohn L."/>
            <person name="Lapalu N."/>
            <person name="Plummer K.M."/>
            <person name="Pradier J.-M."/>
            <person name="Quevillon E."/>
            <person name="Sharon A."/>
            <person name="Simon A."/>
            <person name="ten Have A."/>
            <person name="Tudzynski B."/>
            <person name="Tudzynski P."/>
            <person name="Wincker P."/>
            <person name="Andrew M."/>
            <person name="Anthouard V."/>
            <person name="Beever R.E."/>
            <person name="Beffa R."/>
            <person name="Benoit I."/>
            <person name="Bouzid O."/>
            <person name="Brault B."/>
            <person name="Chen Z."/>
            <person name="Choquer M."/>
            <person name="Collemare J."/>
            <person name="Cotton P."/>
            <person name="Danchin E.G."/>
            <person name="Da Silva C."/>
            <person name="Gautier A."/>
            <person name="Giraud C."/>
            <person name="Giraud T."/>
            <person name="Gonzalez C."/>
            <person name="Grossetete S."/>
            <person name="Gueldener U."/>
            <person name="Henrissat B."/>
            <person name="Howlett B.J."/>
            <person name="Kodira C."/>
            <person name="Kretschmer M."/>
            <person name="Lappartient A."/>
            <person name="Leroch M."/>
            <person name="Levis C."/>
            <person name="Mauceli E."/>
            <person name="Neuveglise C."/>
            <person name="Oeser B."/>
            <person name="Pearson M."/>
            <person name="Poulain J."/>
            <person name="Poussereau N."/>
            <person name="Quesneville H."/>
            <person name="Rascle C."/>
            <person name="Schumacher J."/>
            <person name="Segurens B."/>
            <person name="Sexton A."/>
            <person name="Silva E."/>
            <person name="Sirven C."/>
            <person name="Soanes D.M."/>
            <person name="Talbot N.J."/>
            <person name="Templeton M."/>
            <person name="Yandava C."/>
            <person name="Yarden O."/>
            <person name="Zeng Q."/>
            <person name="Rollins J.A."/>
            <person name="Lebrun M.-H."/>
            <person name="Dickman M."/>
        </authorList>
    </citation>
    <scope>NUCLEOTIDE SEQUENCE [LARGE SCALE GENOMIC DNA]</scope>
    <source>
        <strain>B05.10</strain>
    </source>
</reference>
<reference key="2">
    <citation type="journal article" date="2012" name="Eukaryot. Cell">
        <title>Genome update of Botrytis cinerea strains B05.10 and T4.</title>
        <authorList>
            <person name="Staats M."/>
            <person name="van Kan J.A.L."/>
        </authorList>
    </citation>
    <scope>NUCLEOTIDE SEQUENCE [LARGE SCALE GENOMIC DNA]</scope>
    <source>
        <strain>B05.10</strain>
    </source>
</reference>
<reference key="3">
    <citation type="journal article" date="2017" name="Mol. Plant Pathol.">
        <title>A gapless genome sequence of the fungus Botrytis cinerea.</title>
        <authorList>
            <person name="van Kan J.A.L."/>
            <person name="Stassen J.H.M."/>
            <person name="Mosbach A."/>
            <person name="van der Lee T.A.J."/>
            <person name="Faino L."/>
            <person name="Farmer A.D."/>
            <person name="Papasotiriou D.G."/>
            <person name="Zhou S."/>
            <person name="Seidl M.F."/>
            <person name="Cottam E."/>
            <person name="Edel D."/>
            <person name="Hahn M."/>
            <person name="Schwartz D.C."/>
            <person name="Dietrich R.A."/>
            <person name="Widdison S."/>
            <person name="Scalliet G."/>
        </authorList>
    </citation>
    <scope>NUCLEOTIDE SEQUENCE [LARGE SCALE GENOMIC DNA]</scope>
    <source>
        <strain>B05.10</strain>
    </source>
</reference>
<reference key="4">
    <citation type="journal article" date="2022" name="Microbiol. Spectr.">
        <title>The Linker Region Promotes Activity and Binding Efficiency of Modular LPMO towards Polymeric Substrate.</title>
        <authorList>
            <person name="Srivastava A."/>
            <person name="Nagar P."/>
            <person name="Rathore S."/>
            <person name="Adlakha N."/>
        </authorList>
    </citation>
    <scope>IDENTIFICATION</scope>
    <scope>INDUCTION</scope>
    <scope>FUNCTION</scope>
</reference>
<keyword id="KW-0119">Carbohydrate metabolism</keyword>
<keyword id="KW-0136">Cellulose degradation</keyword>
<keyword id="KW-0186">Copper</keyword>
<keyword id="KW-1015">Disulfide bond</keyword>
<keyword id="KW-0325">Glycoprotein</keyword>
<keyword id="KW-0479">Metal-binding</keyword>
<keyword id="KW-0503">Monooxygenase</keyword>
<keyword id="KW-0560">Oxidoreductase</keyword>
<keyword id="KW-0624">Polysaccharide degradation</keyword>
<keyword id="KW-1185">Reference proteome</keyword>
<keyword id="KW-0964">Secreted</keyword>
<keyword id="KW-0732">Signal</keyword>
<feature type="signal peptide" evidence="4">
    <location>
        <begin position="1"/>
        <end position="19"/>
    </location>
</feature>
<feature type="chain" id="PRO_5016980072" description="AA9 family lytic polysaccharide monooxygenase D" evidence="4">
    <location>
        <begin position="20"/>
        <end position="246"/>
    </location>
</feature>
<feature type="binding site" evidence="1">
    <location>
        <position position="20"/>
    </location>
    <ligand>
        <name>Cu(2+)</name>
        <dbReference type="ChEBI" id="CHEBI:29036"/>
    </ligand>
</feature>
<feature type="binding site" evidence="2">
    <location>
        <position position="182"/>
    </location>
    <ligand>
        <name>O2</name>
        <dbReference type="ChEBI" id="CHEBI:15379"/>
    </ligand>
</feature>
<feature type="binding site" evidence="2">
    <location>
        <position position="191"/>
    </location>
    <ligand>
        <name>O2</name>
        <dbReference type="ChEBI" id="CHEBI:15379"/>
    </ligand>
</feature>
<feature type="binding site" evidence="1">
    <location>
        <position position="193"/>
    </location>
    <ligand>
        <name>Cu(2+)</name>
        <dbReference type="ChEBI" id="CHEBI:29036"/>
    </ligand>
</feature>
<feature type="glycosylation site" description="N-linked (GlcNAc...) asparagine" evidence="5">
    <location>
        <position position="86"/>
    </location>
</feature>
<feature type="glycosylation site" description="N-linked (GlcNAc...) asparagine" evidence="5">
    <location>
        <position position="141"/>
    </location>
</feature>
<feature type="glycosylation site" description="N-linked (GlcNAc...) asparagine" evidence="5">
    <location>
        <position position="156"/>
    </location>
</feature>
<feature type="glycosylation site" description="N-linked (GlcNAc...) asparagine" evidence="5">
    <location>
        <position position="235"/>
    </location>
</feature>
<feature type="disulfide bond" evidence="3">
    <location>
        <begin position="78"/>
        <end position="196"/>
    </location>
</feature>
<gene>
    <name evidence="7" type="primary">AA9D</name>
    <name type="ORF">BCIN_06g07050</name>
</gene>
<protein>
    <recommendedName>
        <fullName evidence="7">AA9 family lytic polysaccharide monooxygenase D</fullName>
        <shortName evidence="7">AA9D</shortName>
        <ecNumber evidence="9">1.14.99.56</ecNumber>
    </recommendedName>
    <alternativeName>
        <fullName evidence="8">Endo-1,4-beta-glucanase AA9D</fullName>
        <shortName evidence="8">Endoglucanase AA9D</shortName>
    </alternativeName>
    <alternativeName>
        <fullName evidence="8">Glycosyl hydrolase 61 family protein AA9D</fullName>
    </alternativeName>
</protein>
<evidence type="ECO:0000250" key="1">
    <source>
        <dbReference type="UniProtKB" id="G2R6N0"/>
    </source>
</evidence>
<evidence type="ECO:0000250" key="2">
    <source>
        <dbReference type="UniProtKB" id="Q1K8B6"/>
    </source>
</evidence>
<evidence type="ECO:0000250" key="3">
    <source>
        <dbReference type="UniProtKB" id="Q7Z9M7"/>
    </source>
</evidence>
<evidence type="ECO:0000255" key="4"/>
<evidence type="ECO:0000255" key="5">
    <source>
        <dbReference type="PROSITE-ProRule" id="PRU00498"/>
    </source>
</evidence>
<evidence type="ECO:0000269" key="6">
    <source>
    </source>
</evidence>
<evidence type="ECO:0000303" key="7">
    <source>
    </source>
</evidence>
<evidence type="ECO:0000305" key="8"/>
<evidence type="ECO:0000305" key="9">
    <source>
    </source>
</evidence>
<dbReference type="EC" id="1.14.99.56" evidence="9"/>
<dbReference type="EMBL" id="CP009810">
    <property type="protein sequence ID" value="ATZ51291.1"/>
    <property type="molecule type" value="Genomic_DNA"/>
</dbReference>
<dbReference type="SMR" id="A0A384JLD1"/>
<dbReference type="EnsemblFungi" id="Bcin06g07050.1">
    <property type="protein sequence ID" value="Bcin06p07050.1"/>
    <property type="gene ID" value="Bcin06g07050"/>
</dbReference>
<dbReference type="VEuPathDB" id="FungiDB:Bcin06g07050"/>
<dbReference type="OrthoDB" id="4849160at2759"/>
<dbReference type="Proteomes" id="UP000001798">
    <property type="component" value="Chromosome bcin06"/>
</dbReference>
<dbReference type="GO" id="GO:0005576">
    <property type="term" value="C:extracellular region"/>
    <property type="evidence" value="ECO:0007669"/>
    <property type="project" value="UniProtKB-SubCell"/>
</dbReference>
<dbReference type="GO" id="GO:0046872">
    <property type="term" value="F:metal ion binding"/>
    <property type="evidence" value="ECO:0007669"/>
    <property type="project" value="UniProtKB-KW"/>
</dbReference>
<dbReference type="GO" id="GO:0004497">
    <property type="term" value="F:monooxygenase activity"/>
    <property type="evidence" value="ECO:0007669"/>
    <property type="project" value="UniProtKB-KW"/>
</dbReference>
<dbReference type="GO" id="GO:0030245">
    <property type="term" value="P:cellulose catabolic process"/>
    <property type="evidence" value="ECO:0007669"/>
    <property type="project" value="UniProtKB-KW"/>
</dbReference>
<dbReference type="CDD" id="cd21175">
    <property type="entry name" value="LPMO_AA9"/>
    <property type="match status" value="1"/>
</dbReference>
<dbReference type="Gene3D" id="2.70.50.70">
    <property type="match status" value="1"/>
</dbReference>
<dbReference type="InterPro" id="IPR049892">
    <property type="entry name" value="AA9"/>
</dbReference>
<dbReference type="InterPro" id="IPR005103">
    <property type="entry name" value="AA9_LPMO"/>
</dbReference>
<dbReference type="PANTHER" id="PTHR33353:SF34">
    <property type="entry name" value="ENDO-BETA-1,4-GLUCANASE D"/>
    <property type="match status" value="1"/>
</dbReference>
<dbReference type="PANTHER" id="PTHR33353">
    <property type="entry name" value="PUTATIVE (AFU_ORTHOLOGUE AFUA_1G12560)-RELATED"/>
    <property type="match status" value="1"/>
</dbReference>
<dbReference type="Pfam" id="PF03443">
    <property type="entry name" value="AA9"/>
    <property type="match status" value="1"/>
</dbReference>